<comment type="function">
    <text evidence="1">NDH-1 shuttles electrons from NADH, via FMN and iron-sulfur (Fe-S) centers, to quinones in the respiratory chain. The immediate electron acceptor for the enzyme in this species is believed to be ubiquinone. Couples the redox reaction to proton translocation (for every two electrons transferred, four hydrogen ions are translocated across the cytoplasmic membrane), and thus conserves the redox energy in a proton gradient.</text>
</comment>
<comment type="catalytic activity">
    <reaction evidence="1">
        <text>a quinone + NADH + 5 H(+)(in) = a quinol + NAD(+) + 4 H(+)(out)</text>
        <dbReference type="Rhea" id="RHEA:57888"/>
        <dbReference type="ChEBI" id="CHEBI:15378"/>
        <dbReference type="ChEBI" id="CHEBI:24646"/>
        <dbReference type="ChEBI" id="CHEBI:57540"/>
        <dbReference type="ChEBI" id="CHEBI:57945"/>
        <dbReference type="ChEBI" id="CHEBI:132124"/>
    </reaction>
</comment>
<comment type="cofactor">
    <cofactor evidence="1">
        <name>[4Fe-4S] cluster</name>
        <dbReference type="ChEBI" id="CHEBI:49883"/>
    </cofactor>
    <text evidence="1">Binds 1 [4Fe-4S] cluster.</text>
</comment>
<comment type="subunit">
    <text evidence="1">NDH-1 is composed of 14 different subunits. Subunits NuoB, C, D, E, F, and G constitute the peripheral sector of the complex.</text>
</comment>
<comment type="subcellular location">
    <subcellularLocation>
        <location evidence="1">Cell inner membrane</location>
        <topology evidence="1">Peripheral membrane protein</topology>
        <orientation evidence="1">Cytoplasmic side</orientation>
    </subcellularLocation>
</comment>
<comment type="similarity">
    <text evidence="1">Belongs to the complex I 20 kDa subunit family.</text>
</comment>
<evidence type="ECO:0000255" key="1">
    <source>
        <dbReference type="HAMAP-Rule" id="MF_01356"/>
    </source>
</evidence>
<evidence type="ECO:0000256" key="2">
    <source>
        <dbReference type="SAM" id="MobiDB-lite"/>
    </source>
</evidence>
<sequence>MSWTIGRPGAEAPEDRMAASHLFTRLDDLVAWSRKHSLWPFNFGLSCCYVEMATALTPVYDQARFGAEVIRSTPRQADLLIVSGTVFRKMAVPLYRLYQQMREPRWVISMGACANSGGMYDIYSVVQGVDSFLPVDVYVPGCPPRPEALMEALVLLQSKIATEARPLQIRMGETGPARPFDPVPRRDALREGRMSVARLADPEST</sequence>
<name>NUOB1_CERS5</name>
<protein>
    <recommendedName>
        <fullName evidence="1">NADH-quinone oxidoreductase subunit B 1</fullName>
        <ecNumber evidence="1">7.1.1.-</ecNumber>
    </recommendedName>
    <alternativeName>
        <fullName evidence="1">NADH dehydrogenase I subunit B 1</fullName>
    </alternativeName>
    <alternativeName>
        <fullName evidence="1">NDH-1 subunit B 1</fullName>
    </alternativeName>
</protein>
<keyword id="KW-0004">4Fe-4S</keyword>
<keyword id="KW-0997">Cell inner membrane</keyword>
<keyword id="KW-1003">Cell membrane</keyword>
<keyword id="KW-0408">Iron</keyword>
<keyword id="KW-0411">Iron-sulfur</keyword>
<keyword id="KW-0472">Membrane</keyword>
<keyword id="KW-0479">Metal-binding</keyword>
<keyword id="KW-0520">NAD</keyword>
<keyword id="KW-0874">Quinone</keyword>
<keyword id="KW-1278">Translocase</keyword>
<keyword id="KW-0813">Transport</keyword>
<keyword id="KW-0830">Ubiquinone</keyword>
<feature type="chain" id="PRO_0000376332" description="NADH-quinone oxidoreductase subunit B 1">
    <location>
        <begin position="1"/>
        <end position="205"/>
    </location>
</feature>
<feature type="region of interest" description="Disordered" evidence="2">
    <location>
        <begin position="171"/>
        <end position="205"/>
    </location>
</feature>
<feature type="compositionally biased region" description="Basic and acidic residues" evidence="2">
    <location>
        <begin position="183"/>
        <end position="193"/>
    </location>
</feature>
<feature type="binding site" evidence="1">
    <location>
        <position position="47"/>
    </location>
    <ligand>
        <name>[4Fe-4S] cluster</name>
        <dbReference type="ChEBI" id="CHEBI:49883"/>
    </ligand>
</feature>
<feature type="binding site" evidence="1">
    <location>
        <position position="48"/>
    </location>
    <ligand>
        <name>[4Fe-4S] cluster</name>
        <dbReference type="ChEBI" id="CHEBI:49883"/>
    </ligand>
</feature>
<feature type="binding site" evidence="1">
    <location>
        <position position="113"/>
    </location>
    <ligand>
        <name>[4Fe-4S] cluster</name>
        <dbReference type="ChEBI" id="CHEBI:49883"/>
    </ligand>
</feature>
<feature type="binding site" evidence="1">
    <location>
        <position position="142"/>
    </location>
    <ligand>
        <name>[4Fe-4S] cluster</name>
        <dbReference type="ChEBI" id="CHEBI:49883"/>
    </ligand>
</feature>
<reference key="1">
    <citation type="submission" date="2007-04" db="EMBL/GenBank/DDBJ databases">
        <title>Complete sequence of chromosome of Rhodobacter sphaeroides ATCC 17025.</title>
        <authorList>
            <consortium name="US DOE Joint Genome Institute"/>
            <person name="Copeland A."/>
            <person name="Lucas S."/>
            <person name="Lapidus A."/>
            <person name="Barry K."/>
            <person name="Detter J.C."/>
            <person name="Glavina del Rio T."/>
            <person name="Hammon N."/>
            <person name="Israni S."/>
            <person name="Dalin E."/>
            <person name="Tice H."/>
            <person name="Pitluck S."/>
            <person name="Chertkov O."/>
            <person name="Brettin T."/>
            <person name="Bruce D."/>
            <person name="Han C."/>
            <person name="Schmutz J."/>
            <person name="Larimer F."/>
            <person name="Land M."/>
            <person name="Hauser L."/>
            <person name="Kyrpides N."/>
            <person name="Kim E."/>
            <person name="Richardson P."/>
            <person name="Mackenzie C."/>
            <person name="Choudhary M."/>
            <person name="Donohue T.J."/>
            <person name="Kaplan S."/>
        </authorList>
    </citation>
    <scope>NUCLEOTIDE SEQUENCE [LARGE SCALE GENOMIC DNA]</scope>
    <source>
        <strain>ATCC 17025 / ATH 2.4.3</strain>
    </source>
</reference>
<organism>
    <name type="scientific">Cereibacter sphaeroides (strain ATCC 17025 / ATH 2.4.3)</name>
    <name type="common">Rhodobacter sphaeroides</name>
    <dbReference type="NCBI Taxonomy" id="349102"/>
    <lineage>
        <taxon>Bacteria</taxon>
        <taxon>Pseudomonadati</taxon>
        <taxon>Pseudomonadota</taxon>
        <taxon>Alphaproteobacteria</taxon>
        <taxon>Rhodobacterales</taxon>
        <taxon>Paracoccaceae</taxon>
        <taxon>Cereibacter</taxon>
    </lineage>
</organism>
<accession>A4WT69</accession>
<gene>
    <name evidence="1" type="primary">nuoB1</name>
    <name type="ordered locus">Rsph17025_1690</name>
</gene>
<proteinExistence type="inferred from homology"/>
<dbReference type="EC" id="7.1.1.-" evidence="1"/>
<dbReference type="EMBL" id="CP000661">
    <property type="protein sequence ID" value="ABP70583.1"/>
    <property type="molecule type" value="Genomic_DNA"/>
</dbReference>
<dbReference type="SMR" id="A4WT69"/>
<dbReference type="STRING" id="349102.Rsph17025_1690"/>
<dbReference type="KEGG" id="rsq:Rsph17025_1690"/>
<dbReference type="eggNOG" id="COG0377">
    <property type="taxonomic scope" value="Bacteria"/>
</dbReference>
<dbReference type="HOGENOM" id="CLU_055737_7_3_5"/>
<dbReference type="BioCyc" id="RSPH349102:G1G8M-1738-MONOMER"/>
<dbReference type="GO" id="GO:0005886">
    <property type="term" value="C:plasma membrane"/>
    <property type="evidence" value="ECO:0007669"/>
    <property type="project" value="UniProtKB-SubCell"/>
</dbReference>
<dbReference type="GO" id="GO:0045271">
    <property type="term" value="C:respiratory chain complex I"/>
    <property type="evidence" value="ECO:0007669"/>
    <property type="project" value="TreeGrafter"/>
</dbReference>
<dbReference type="GO" id="GO:0051539">
    <property type="term" value="F:4 iron, 4 sulfur cluster binding"/>
    <property type="evidence" value="ECO:0007669"/>
    <property type="project" value="UniProtKB-KW"/>
</dbReference>
<dbReference type="GO" id="GO:0005506">
    <property type="term" value="F:iron ion binding"/>
    <property type="evidence" value="ECO:0007669"/>
    <property type="project" value="UniProtKB-UniRule"/>
</dbReference>
<dbReference type="GO" id="GO:0008137">
    <property type="term" value="F:NADH dehydrogenase (ubiquinone) activity"/>
    <property type="evidence" value="ECO:0007669"/>
    <property type="project" value="InterPro"/>
</dbReference>
<dbReference type="GO" id="GO:0050136">
    <property type="term" value="F:NADH:ubiquinone reductase (non-electrogenic) activity"/>
    <property type="evidence" value="ECO:0007669"/>
    <property type="project" value="UniProtKB-UniRule"/>
</dbReference>
<dbReference type="GO" id="GO:0048038">
    <property type="term" value="F:quinone binding"/>
    <property type="evidence" value="ECO:0007669"/>
    <property type="project" value="UniProtKB-KW"/>
</dbReference>
<dbReference type="GO" id="GO:0009060">
    <property type="term" value="P:aerobic respiration"/>
    <property type="evidence" value="ECO:0007669"/>
    <property type="project" value="TreeGrafter"/>
</dbReference>
<dbReference type="GO" id="GO:0015990">
    <property type="term" value="P:electron transport coupled proton transport"/>
    <property type="evidence" value="ECO:0007669"/>
    <property type="project" value="TreeGrafter"/>
</dbReference>
<dbReference type="FunFam" id="3.40.50.12280:FF:000002">
    <property type="entry name" value="NADH-quinone oxidoreductase subunit B"/>
    <property type="match status" value="1"/>
</dbReference>
<dbReference type="Gene3D" id="3.40.50.12280">
    <property type="match status" value="1"/>
</dbReference>
<dbReference type="HAMAP" id="MF_01356">
    <property type="entry name" value="NDH1_NuoB"/>
    <property type="match status" value="1"/>
</dbReference>
<dbReference type="InterPro" id="IPR006137">
    <property type="entry name" value="NADH_UbQ_OxRdtase-like_20kDa"/>
</dbReference>
<dbReference type="InterPro" id="IPR006138">
    <property type="entry name" value="NADH_UQ_OxRdtase_20Kd_su"/>
</dbReference>
<dbReference type="NCBIfam" id="TIGR01957">
    <property type="entry name" value="nuoB_fam"/>
    <property type="match status" value="1"/>
</dbReference>
<dbReference type="NCBIfam" id="NF005012">
    <property type="entry name" value="PRK06411.1"/>
    <property type="match status" value="1"/>
</dbReference>
<dbReference type="PANTHER" id="PTHR11995">
    <property type="entry name" value="NADH DEHYDROGENASE"/>
    <property type="match status" value="1"/>
</dbReference>
<dbReference type="PANTHER" id="PTHR11995:SF14">
    <property type="entry name" value="NADH DEHYDROGENASE [UBIQUINONE] IRON-SULFUR PROTEIN 7, MITOCHONDRIAL"/>
    <property type="match status" value="1"/>
</dbReference>
<dbReference type="Pfam" id="PF01058">
    <property type="entry name" value="Oxidored_q6"/>
    <property type="match status" value="1"/>
</dbReference>
<dbReference type="SUPFAM" id="SSF56770">
    <property type="entry name" value="HydA/Nqo6-like"/>
    <property type="match status" value="1"/>
</dbReference>
<dbReference type="PROSITE" id="PS01150">
    <property type="entry name" value="COMPLEX1_20K"/>
    <property type="match status" value="1"/>
</dbReference>